<proteinExistence type="inferred from homology"/>
<reference key="1">
    <citation type="submission" date="2007-06" db="EMBL/GenBank/DDBJ databases">
        <title>Complete sequence of chromosome of Staphylococcus aureus subsp. aureus JH1.</title>
        <authorList>
            <consortium name="US DOE Joint Genome Institute"/>
            <person name="Copeland A."/>
            <person name="Lucas S."/>
            <person name="Lapidus A."/>
            <person name="Barry K."/>
            <person name="Detter J.C."/>
            <person name="Glavina del Rio T."/>
            <person name="Hammon N."/>
            <person name="Israni S."/>
            <person name="Dalin E."/>
            <person name="Tice H."/>
            <person name="Pitluck S."/>
            <person name="Chain P."/>
            <person name="Malfatti S."/>
            <person name="Shin M."/>
            <person name="Vergez L."/>
            <person name="Schmutz J."/>
            <person name="Larimer F."/>
            <person name="Land M."/>
            <person name="Hauser L."/>
            <person name="Kyrpides N."/>
            <person name="Ivanova N."/>
            <person name="Tomasz A."/>
            <person name="Richardson P."/>
        </authorList>
    </citation>
    <scope>NUCLEOTIDE SEQUENCE [LARGE SCALE GENOMIC DNA]</scope>
    <source>
        <strain>JH1</strain>
    </source>
</reference>
<comment type="function">
    <text evidence="1">The heterodimer acts as both an ATP-dependent DNA helicase and an ATP-dependent, dual-direction single-stranded exonuclease. Recognizes the chi site generating a DNA molecule suitable for the initiation of homologous recombination. The AddA nuclease domain is required for chi fragment generation; this subunit has the helicase and 3' -&gt; 5' nuclease activities.</text>
</comment>
<comment type="catalytic activity">
    <reaction evidence="1">
        <text>Couples ATP hydrolysis with the unwinding of duplex DNA by translocating in the 3'-5' direction.</text>
        <dbReference type="EC" id="5.6.2.4"/>
    </reaction>
</comment>
<comment type="catalytic activity">
    <reaction evidence="1">
        <text>ATP + H2O = ADP + phosphate + H(+)</text>
        <dbReference type="Rhea" id="RHEA:13065"/>
        <dbReference type="ChEBI" id="CHEBI:15377"/>
        <dbReference type="ChEBI" id="CHEBI:15378"/>
        <dbReference type="ChEBI" id="CHEBI:30616"/>
        <dbReference type="ChEBI" id="CHEBI:43474"/>
        <dbReference type="ChEBI" id="CHEBI:456216"/>
        <dbReference type="EC" id="5.6.2.4"/>
    </reaction>
</comment>
<comment type="cofactor">
    <cofactor evidence="1">
        <name>Mg(2+)</name>
        <dbReference type="ChEBI" id="CHEBI:18420"/>
    </cofactor>
</comment>
<comment type="subunit">
    <text evidence="1">Heterodimer of AddA and AddB/RexB.</text>
</comment>
<comment type="similarity">
    <text evidence="1">Belongs to the helicase family. AddA subfamily.</text>
</comment>
<dbReference type="EC" id="3.1.-.-" evidence="1"/>
<dbReference type="EC" id="5.6.2.4" evidence="1"/>
<dbReference type="EMBL" id="CP000736">
    <property type="protein sequence ID" value="ABR51842.1"/>
    <property type="molecule type" value="Genomic_DNA"/>
</dbReference>
<dbReference type="SMR" id="A6U074"/>
<dbReference type="KEGG" id="sah:SaurJH1_0986"/>
<dbReference type="HOGENOM" id="CLU_001114_3_1_9"/>
<dbReference type="GO" id="GO:0005829">
    <property type="term" value="C:cytosol"/>
    <property type="evidence" value="ECO:0007669"/>
    <property type="project" value="TreeGrafter"/>
</dbReference>
<dbReference type="GO" id="GO:0033202">
    <property type="term" value="C:DNA helicase complex"/>
    <property type="evidence" value="ECO:0007669"/>
    <property type="project" value="TreeGrafter"/>
</dbReference>
<dbReference type="GO" id="GO:0043138">
    <property type="term" value="F:3'-5' DNA helicase activity"/>
    <property type="evidence" value="ECO:0007669"/>
    <property type="project" value="UniProtKB-UniRule"/>
</dbReference>
<dbReference type="GO" id="GO:0008408">
    <property type="term" value="F:3'-5' exonuclease activity"/>
    <property type="evidence" value="ECO:0007669"/>
    <property type="project" value="UniProtKB-UniRule"/>
</dbReference>
<dbReference type="GO" id="GO:0005524">
    <property type="term" value="F:ATP binding"/>
    <property type="evidence" value="ECO:0007669"/>
    <property type="project" value="UniProtKB-UniRule"/>
</dbReference>
<dbReference type="GO" id="GO:0016887">
    <property type="term" value="F:ATP hydrolysis activity"/>
    <property type="evidence" value="ECO:0007669"/>
    <property type="project" value="RHEA"/>
</dbReference>
<dbReference type="GO" id="GO:0003690">
    <property type="term" value="F:double-stranded DNA binding"/>
    <property type="evidence" value="ECO:0007669"/>
    <property type="project" value="UniProtKB-UniRule"/>
</dbReference>
<dbReference type="GO" id="GO:0000724">
    <property type="term" value="P:double-strand break repair via homologous recombination"/>
    <property type="evidence" value="ECO:0007669"/>
    <property type="project" value="UniProtKB-UniRule"/>
</dbReference>
<dbReference type="CDD" id="cd17932">
    <property type="entry name" value="DEXQc_UvrD"/>
    <property type="match status" value="2"/>
</dbReference>
<dbReference type="FunFam" id="3.40.50.300:FF:001196">
    <property type="entry name" value="ATP-dependent helicase/nuclease subunit A"/>
    <property type="match status" value="1"/>
</dbReference>
<dbReference type="FunFam" id="3.40.50.300:FF:001715">
    <property type="entry name" value="ATP-dependent helicase/nuclease subunit A"/>
    <property type="match status" value="1"/>
</dbReference>
<dbReference type="Gene3D" id="3.90.320.10">
    <property type="match status" value="1"/>
</dbReference>
<dbReference type="Gene3D" id="3.40.50.300">
    <property type="entry name" value="P-loop containing nucleotide triphosphate hydrolases"/>
    <property type="match status" value="4"/>
</dbReference>
<dbReference type="Gene3D" id="1.10.486.10">
    <property type="entry name" value="PCRA, domain 4"/>
    <property type="match status" value="1"/>
</dbReference>
<dbReference type="HAMAP" id="MF_01451">
    <property type="entry name" value="AddA"/>
    <property type="match status" value="1"/>
</dbReference>
<dbReference type="InterPro" id="IPR014152">
    <property type="entry name" value="AddA"/>
</dbReference>
<dbReference type="InterPro" id="IPR014017">
    <property type="entry name" value="DNA_helicase_UvrD-like_C"/>
</dbReference>
<dbReference type="InterPro" id="IPR000212">
    <property type="entry name" value="DNA_helicase_UvrD/REP"/>
</dbReference>
<dbReference type="InterPro" id="IPR027417">
    <property type="entry name" value="P-loop_NTPase"/>
</dbReference>
<dbReference type="InterPro" id="IPR011604">
    <property type="entry name" value="PDDEXK-like_dom_sf"/>
</dbReference>
<dbReference type="InterPro" id="IPR038726">
    <property type="entry name" value="PDDEXK_AddAB-type"/>
</dbReference>
<dbReference type="InterPro" id="IPR011335">
    <property type="entry name" value="Restrct_endonuc-II-like"/>
</dbReference>
<dbReference type="InterPro" id="IPR014016">
    <property type="entry name" value="UvrD-like_ATP-bd"/>
</dbReference>
<dbReference type="NCBIfam" id="TIGR02785">
    <property type="entry name" value="addA_Gpos"/>
    <property type="match status" value="1"/>
</dbReference>
<dbReference type="PANTHER" id="PTHR11070:SF48">
    <property type="entry name" value="ATP-DEPENDENT HELICASE_NUCLEASE SUBUNIT A"/>
    <property type="match status" value="1"/>
</dbReference>
<dbReference type="PANTHER" id="PTHR11070">
    <property type="entry name" value="UVRD / RECB / PCRA DNA HELICASE FAMILY MEMBER"/>
    <property type="match status" value="1"/>
</dbReference>
<dbReference type="Pfam" id="PF12705">
    <property type="entry name" value="PDDEXK_1"/>
    <property type="match status" value="1"/>
</dbReference>
<dbReference type="Pfam" id="PF00580">
    <property type="entry name" value="UvrD-helicase"/>
    <property type="match status" value="1"/>
</dbReference>
<dbReference type="Pfam" id="PF13361">
    <property type="entry name" value="UvrD_C"/>
    <property type="match status" value="1"/>
</dbReference>
<dbReference type="SUPFAM" id="SSF52540">
    <property type="entry name" value="P-loop containing nucleoside triphosphate hydrolases"/>
    <property type="match status" value="1"/>
</dbReference>
<dbReference type="SUPFAM" id="SSF52980">
    <property type="entry name" value="Restriction endonuclease-like"/>
    <property type="match status" value="1"/>
</dbReference>
<dbReference type="PROSITE" id="PS51198">
    <property type="entry name" value="UVRD_HELICASE_ATP_BIND"/>
    <property type="match status" value="1"/>
</dbReference>
<dbReference type="PROSITE" id="PS51217">
    <property type="entry name" value="UVRD_HELICASE_CTER"/>
    <property type="match status" value="1"/>
</dbReference>
<evidence type="ECO:0000255" key="1">
    <source>
        <dbReference type="HAMAP-Rule" id="MF_01451"/>
    </source>
</evidence>
<organism>
    <name type="scientific">Staphylococcus aureus (strain JH1)</name>
    <dbReference type="NCBI Taxonomy" id="359787"/>
    <lineage>
        <taxon>Bacteria</taxon>
        <taxon>Bacillati</taxon>
        <taxon>Bacillota</taxon>
        <taxon>Bacilli</taxon>
        <taxon>Bacillales</taxon>
        <taxon>Staphylococcaceae</taxon>
        <taxon>Staphylococcus</taxon>
    </lineage>
</organism>
<keyword id="KW-0067">ATP-binding</keyword>
<keyword id="KW-0227">DNA damage</keyword>
<keyword id="KW-0234">DNA repair</keyword>
<keyword id="KW-0238">DNA-binding</keyword>
<keyword id="KW-0269">Exonuclease</keyword>
<keyword id="KW-0347">Helicase</keyword>
<keyword id="KW-0378">Hydrolase</keyword>
<keyword id="KW-0413">Isomerase</keyword>
<keyword id="KW-0540">Nuclease</keyword>
<keyword id="KW-0547">Nucleotide-binding</keyword>
<feature type="chain" id="PRO_0000379309" description="ATP-dependent helicase/nuclease subunit A">
    <location>
        <begin position="1"/>
        <end position="1217"/>
    </location>
</feature>
<feature type="domain" description="UvrD-like helicase ATP-binding" evidence="1">
    <location>
        <begin position="10"/>
        <end position="475"/>
    </location>
</feature>
<feature type="domain" description="UvrD-like helicase C-terminal" evidence="1">
    <location>
        <begin position="476"/>
        <end position="786"/>
    </location>
</feature>
<feature type="binding site" evidence="1">
    <location>
        <begin position="31"/>
        <end position="38"/>
    </location>
    <ligand>
        <name>ATP</name>
        <dbReference type="ChEBI" id="CHEBI:30616"/>
    </ligand>
</feature>
<name>ADDA_STAA2</name>
<gene>
    <name evidence="1" type="primary">addA</name>
    <name type="ordered locus">SaurJH1_0986</name>
</gene>
<accession>A6U074</accession>
<sequence>MTIPEKPQGVIWTDAQWQSIYATGQDVLVAAAAGSGKTAVLVERIIQKILRDGIDVDRLLVVTFTNLSAREMKHRVDQRIQEASIADPANAHLKNQRIKIHQAQISTLHSFCLKLIQQHYDVLNIDPNFRTSSEAENILLLEQTIDEVIEQHYDILDPAFIELTEQLSSDRSDDQFRMIIKQLYFFSVANPNPTNWLDQLVTPYEEEAQQAQLIQLLTDLSKVFITAAYDALNKAYDLFSMMDGVDKHLAVIEDERRLMGRVLEGGFIDIPYLTDHEFGARLPNVTAKIKEANEMMVDALEDAKLQYKKYKSLIDKVKNDYFSREADDLKADMQQLAPRVKYLARIVKDVMSEFNRKKRSKNILDFSDYEHFALQILTNEDGSPSEIAESYRQHFQEILVDEYQDTNRVQEKILSCIKTGDEHNGNLFMVGDVKQSIYKFRQADPSLFIEKYQRFTIDGDGTGRRIDLSQNFRSRKEVLSTTNYIFKHMMDEQVGEVKYDEAAQLYYGAPYDESDHPVNLKVLVEADQEHSDLTGSEQEAHFIVEQVKDILEHQKVYDMKTGSYRSATYKDIVILERSFGQARNLQQAFKNEDIPFHVNSREGYFEQTEVRLVLSFLRAIDNPLQDIYLVGLMRSVIYQFKEDELAQIRILSPNDDYFYQSIVNYINDEAADAILVDKLKMFLSDIQSYQQYSKDHPVYQLIDKFYNDHYVIQYFSGLIGGRGRRANLYGLFNKAIEFENSSFRGLYQFIRFIDELIERGKDFGEENVVGPNDNVVRMMTIHSSKGLEFPFVIYSGLSKDFNKRDLKQPVILNQQFGLGMDYFDVDKEMAFPSLASVAYKAVAEKELVSEEMRLVYVALTRAKEQLYLIGRVKNDKSLLELEQLSISGEHIAVNERLTSPNPFHLIYSILSKHQSASIPDDLKFEKDIAQVEDSSRPNVNISIIYFEDVSTETILDNNEYRSVNQLETMQNGNEDVKAQIKHQLDYQYPYVNDTKKPSKQSVSELKRQYETEESGTSYERVRQYRIGFSTYERPKFLSEQGKRKANEIGTLMHTVMQHLPFKKERISEVELHQYIDGLIDKHIIEADAKKDIRMDEIMTFINSELYSIIAEAEQVYRELPFVVNQALVDQLPQGDEDVSIIQGMIDLIFVKDGVHYFVDYKTDAFNRRRGMTDEEIGTQLKNKYKIQMKYYQNTLQTILNKEVKGYLYFFKFGTLQL</sequence>
<protein>
    <recommendedName>
        <fullName evidence="1">ATP-dependent helicase/nuclease subunit A</fullName>
        <ecNumber evidence="1">3.1.-.-</ecNumber>
        <ecNumber evidence="1">5.6.2.4</ecNumber>
    </recommendedName>
    <alternativeName>
        <fullName evidence="1">ATP-dependent helicase/nuclease AddA</fullName>
    </alternativeName>
    <alternativeName>
        <fullName evidence="1">DNA 3'-5' helicase AddA</fullName>
    </alternativeName>
</protein>